<proteinExistence type="inferred from homology"/>
<keyword id="KW-0929">Antimicrobial</keyword>
<keyword id="KW-1015">Disulfide bond</keyword>
<keyword id="KW-0295">Fungicide</keyword>
<keyword id="KW-0611">Plant defense</keyword>
<keyword id="KW-1185">Reference proteome</keyword>
<keyword id="KW-0964">Secreted</keyword>
<keyword id="KW-0732">Signal</keyword>
<reference evidence="3" key="1">
    <citation type="journal article" date="1999" name="Nature">
        <title>Sequence and analysis of chromosome 4 of the plant Arabidopsis thaliana.</title>
        <authorList>
            <person name="Mayer K.F.X."/>
            <person name="Schueller C."/>
            <person name="Wambutt R."/>
            <person name="Murphy G."/>
            <person name="Volckaert G."/>
            <person name="Pohl T."/>
            <person name="Duesterhoeft A."/>
            <person name="Stiekema W."/>
            <person name="Entian K.-D."/>
            <person name="Terryn N."/>
            <person name="Harris B."/>
            <person name="Ansorge W."/>
            <person name="Brandt P."/>
            <person name="Grivell L.A."/>
            <person name="Rieger M."/>
            <person name="Weichselgartner M."/>
            <person name="de Simone V."/>
            <person name="Obermaier B."/>
            <person name="Mache R."/>
            <person name="Mueller M."/>
            <person name="Kreis M."/>
            <person name="Delseny M."/>
            <person name="Puigdomenech P."/>
            <person name="Watson M."/>
            <person name="Schmidtheini T."/>
            <person name="Reichert B."/>
            <person name="Portetelle D."/>
            <person name="Perez-Alonso M."/>
            <person name="Boutry M."/>
            <person name="Bancroft I."/>
            <person name="Vos P."/>
            <person name="Hoheisel J."/>
            <person name="Zimmermann W."/>
            <person name="Wedler H."/>
            <person name="Ridley P."/>
            <person name="Langham S.-A."/>
            <person name="McCullagh B."/>
            <person name="Bilham L."/>
            <person name="Robben J."/>
            <person name="van der Schueren J."/>
            <person name="Grymonprez B."/>
            <person name="Chuang Y.-J."/>
            <person name="Vandenbussche F."/>
            <person name="Braeken M."/>
            <person name="Weltjens I."/>
            <person name="Voet M."/>
            <person name="Bastiaens I."/>
            <person name="Aert R."/>
            <person name="Defoor E."/>
            <person name="Weitzenegger T."/>
            <person name="Bothe G."/>
            <person name="Ramsperger U."/>
            <person name="Hilbert H."/>
            <person name="Braun M."/>
            <person name="Holzer E."/>
            <person name="Brandt A."/>
            <person name="Peters S."/>
            <person name="van Staveren M."/>
            <person name="Dirkse W."/>
            <person name="Mooijman P."/>
            <person name="Klein Lankhorst R."/>
            <person name="Rose M."/>
            <person name="Hauf J."/>
            <person name="Koetter P."/>
            <person name="Berneiser S."/>
            <person name="Hempel S."/>
            <person name="Feldpausch M."/>
            <person name="Lamberth S."/>
            <person name="Van den Daele H."/>
            <person name="De Keyser A."/>
            <person name="Buysshaert C."/>
            <person name="Gielen J."/>
            <person name="Villarroel R."/>
            <person name="De Clercq R."/>
            <person name="van Montagu M."/>
            <person name="Rogers J."/>
            <person name="Cronin A."/>
            <person name="Quail M.A."/>
            <person name="Bray-Allen S."/>
            <person name="Clark L."/>
            <person name="Doggett J."/>
            <person name="Hall S."/>
            <person name="Kay M."/>
            <person name="Lennard N."/>
            <person name="McLay K."/>
            <person name="Mayes R."/>
            <person name="Pettett A."/>
            <person name="Rajandream M.A."/>
            <person name="Lyne M."/>
            <person name="Benes V."/>
            <person name="Rechmann S."/>
            <person name="Borkova D."/>
            <person name="Bloecker H."/>
            <person name="Scharfe M."/>
            <person name="Grimm M."/>
            <person name="Loehnert T.-H."/>
            <person name="Dose S."/>
            <person name="de Haan M."/>
            <person name="Maarse A.C."/>
            <person name="Schaefer M."/>
            <person name="Mueller-Auer S."/>
            <person name="Gabel C."/>
            <person name="Fuchs M."/>
            <person name="Fartmann B."/>
            <person name="Granderath K."/>
            <person name="Dauner D."/>
            <person name="Herzl A."/>
            <person name="Neumann S."/>
            <person name="Argiriou A."/>
            <person name="Vitale D."/>
            <person name="Liguori R."/>
            <person name="Piravandi E."/>
            <person name="Massenet O."/>
            <person name="Quigley F."/>
            <person name="Clabauld G."/>
            <person name="Muendlein A."/>
            <person name="Felber R."/>
            <person name="Schnabl S."/>
            <person name="Hiller R."/>
            <person name="Schmidt W."/>
            <person name="Lecharny A."/>
            <person name="Aubourg S."/>
            <person name="Chefdor F."/>
            <person name="Cooke R."/>
            <person name="Berger C."/>
            <person name="Monfort A."/>
            <person name="Casacuberta E."/>
            <person name="Gibbons T."/>
            <person name="Weber N."/>
            <person name="Vandenbol M."/>
            <person name="Bargues M."/>
            <person name="Terol J."/>
            <person name="Torres A."/>
            <person name="Perez-Perez A."/>
            <person name="Purnelle B."/>
            <person name="Bent E."/>
            <person name="Johnson S."/>
            <person name="Tacon D."/>
            <person name="Jesse T."/>
            <person name="Heijnen L."/>
            <person name="Schwarz S."/>
            <person name="Scholler P."/>
            <person name="Heber S."/>
            <person name="Francs P."/>
            <person name="Bielke C."/>
            <person name="Frishman D."/>
            <person name="Haase D."/>
            <person name="Lemcke K."/>
            <person name="Mewes H.-W."/>
            <person name="Stocker S."/>
            <person name="Zaccaria P."/>
            <person name="Bevan M."/>
            <person name="Wilson R.K."/>
            <person name="de la Bastide M."/>
            <person name="Habermann K."/>
            <person name="Parnell L."/>
            <person name="Dedhia N."/>
            <person name="Gnoj L."/>
            <person name="Schutz K."/>
            <person name="Huang E."/>
            <person name="Spiegel L."/>
            <person name="Sekhon M."/>
            <person name="Murray J."/>
            <person name="Sheet P."/>
            <person name="Cordes M."/>
            <person name="Abu-Threideh J."/>
            <person name="Stoneking T."/>
            <person name="Kalicki J."/>
            <person name="Graves T."/>
            <person name="Harmon G."/>
            <person name="Edwards J."/>
            <person name="Latreille P."/>
            <person name="Courtney L."/>
            <person name="Cloud J."/>
            <person name="Abbott A."/>
            <person name="Scott K."/>
            <person name="Johnson D."/>
            <person name="Minx P."/>
            <person name="Bentley D."/>
            <person name="Fulton B."/>
            <person name="Miller N."/>
            <person name="Greco T."/>
            <person name="Kemp K."/>
            <person name="Kramer J."/>
            <person name="Fulton L."/>
            <person name="Mardis E."/>
            <person name="Dante M."/>
            <person name="Pepin K."/>
            <person name="Hillier L.W."/>
            <person name="Nelson J."/>
            <person name="Spieth J."/>
            <person name="Ryan E."/>
            <person name="Andrews S."/>
            <person name="Geisel C."/>
            <person name="Layman D."/>
            <person name="Du H."/>
            <person name="Ali J."/>
            <person name="Berghoff A."/>
            <person name="Jones K."/>
            <person name="Drone K."/>
            <person name="Cotton M."/>
            <person name="Joshu C."/>
            <person name="Antonoiu B."/>
            <person name="Zidanic M."/>
            <person name="Strong C."/>
            <person name="Sun H."/>
            <person name="Lamar B."/>
            <person name="Yordan C."/>
            <person name="Ma P."/>
            <person name="Zhong J."/>
            <person name="Preston R."/>
            <person name="Vil D."/>
            <person name="Shekher M."/>
            <person name="Matero A."/>
            <person name="Shah R."/>
            <person name="Swaby I.K."/>
            <person name="O'Shaughnessy A."/>
            <person name="Rodriguez M."/>
            <person name="Hoffman J."/>
            <person name="Till S."/>
            <person name="Granat S."/>
            <person name="Shohdy N."/>
            <person name="Hasegawa A."/>
            <person name="Hameed A."/>
            <person name="Lodhi M."/>
            <person name="Johnson A."/>
            <person name="Chen E."/>
            <person name="Marra M.A."/>
            <person name="Martienssen R."/>
            <person name="McCombie W.R."/>
        </authorList>
    </citation>
    <scope>NUCLEOTIDE SEQUENCE [LARGE SCALE GENOMIC DNA]</scope>
    <source>
        <strain>cv. Columbia</strain>
    </source>
</reference>
<reference key="2">
    <citation type="journal article" date="2017" name="Plant J.">
        <title>Araport11: a complete reannotation of the Arabidopsis thaliana reference genome.</title>
        <authorList>
            <person name="Cheng C.Y."/>
            <person name="Krishnakumar V."/>
            <person name="Chan A.P."/>
            <person name="Thibaud-Nissen F."/>
            <person name="Schobel S."/>
            <person name="Town C.D."/>
        </authorList>
    </citation>
    <scope>GENOME REANNOTATION</scope>
    <source>
        <strain>cv. Columbia</strain>
    </source>
</reference>
<reference evidence="3" key="3">
    <citation type="journal article" date="2001" name="Plant Mol. Biol.">
        <title>Two large Arabidopsis thaliana gene families are homologous to the Brassica gene superfamily that encodes pollen coat proteins and the male component of the self-incompatibility response.</title>
        <authorList>
            <person name="Vanoosthuyse V."/>
            <person name="Miege C."/>
            <person name="Dumas C."/>
            <person name="Cock J.M."/>
        </authorList>
    </citation>
    <scope>IDENTIFICATION</scope>
</reference>
<reference key="4">
    <citation type="journal article" date="2005" name="Plant Physiol.">
        <title>Genome organization of more than 300 defensin-like genes in Arabidopsis.</title>
        <authorList>
            <person name="Silverstein K.A.T."/>
            <person name="Graham M.A."/>
            <person name="Paape T.D."/>
            <person name="VandenBosch K.A."/>
        </authorList>
    </citation>
    <scope>GENE FAMILY</scope>
</reference>
<evidence type="ECO:0000250" key="1"/>
<evidence type="ECO:0000255" key="2"/>
<evidence type="ECO:0000305" key="3"/>
<dbReference type="EMBL" id="AL049487">
    <property type="status" value="NOT_ANNOTATED_CDS"/>
    <property type="molecule type" value="Genomic_DNA"/>
</dbReference>
<dbReference type="EMBL" id="AL161516">
    <property type="status" value="NOT_ANNOTATED_CDS"/>
    <property type="molecule type" value="Genomic_DNA"/>
</dbReference>
<dbReference type="EMBL" id="CP002687">
    <property type="protein sequence ID" value="AEE82843.1"/>
    <property type="molecule type" value="Genomic_DNA"/>
</dbReference>
<dbReference type="RefSeq" id="NP_001031608.1">
    <property type="nucleotide sequence ID" value="NM_001036531.2"/>
</dbReference>
<dbReference type="SMR" id="P82639"/>
<dbReference type="STRING" id="3702.P82639"/>
<dbReference type="PaxDb" id="3702-AT4G10115.1"/>
<dbReference type="ProteomicsDB" id="224648"/>
<dbReference type="EnsemblPlants" id="AT4G10115.1">
    <property type="protein sequence ID" value="AT4G10115.1"/>
    <property type="gene ID" value="AT4G10115"/>
</dbReference>
<dbReference type="GeneID" id="3770425"/>
<dbReference type="Gramene" id="AT4G10115.1">
    <property type="protein sequence ID" value="AT4G10115.1"/>
    <property type="gene ID" value="AT4G10115"/>
</dbReference>
<dbReference type="KEGG" id="ath:AT4G10115"/>
<dbReference type="Araport" id="AT4G10115"/>
<dbReference type="TAIR" id="AT4G10115">
    <property type="gene designation" value="SCRL20"/>
</dbReference>
<dbReference type="HOGENOM" id="CLU_174283_1_0_1"/>
<dbReference type="InParanoid" id="P82639"/>
<dbReference type="OMA" id="CECTNRI"/>
<dbReference type="OrthoDB" id="10268187at2759"/>
<dbReference type="PhylomeDB" id="P82639"/>
<dbReference type="PRO" id="PR:P82639"/>
<dbReference type="Proteomes" id="UP000006548">
    <property type="component" value="Chromosome 4"/>
</dbReference>
<dbReference type="ExpressionAtlas" id="P82639">
    <property type="expression patterns" value="baseline"/>
</dbReference>
<dbReference type="GO" id="GO:0005576">
    <property type="term" value="C:extracellular region"/>
    <property type="evidence" value="ECO:0007669"/>
    <property type="project" value="UniProtKB-SubCell"/>
</dbReference>
<dbReference type="GO" id="GO:0050832">
    <property type="term" value="P:defense response to fungus"/>
    <property type="evidence" value="ECO:0007669"/>
    <property type="project" value="UniProtKB-KW"/>
</dbReference>
<dbReference type="GO" id="GO:0031640">
    <property type="term" value="P:killing of cells of another organism"/>
    <property type="evidence" value="ECO:0007669"/>
    <property type="project" value="UniProtKB-KW"/>
</dbReference>
<dbReference type="GO" id="GO:0007165">
    <property type="term" value="P:signal transduction"/>
    <property type="evidence" value="ECO:0007669"/>
    <property type="project" value="InterPro"/>
</dbReference>
<dbReference type="InterPro" id="IPR010682">
    <property type="entry name" value="SCRL"/>
</dbReference>
<dbReference type="PANTHER" id="PTHR34450:SF6">
    <property type="entry name" value="DEFENSIN-LIKE PROTEIN 241-RELATED"/>
    <property type="match status" value="1"/>
</dbReference>
<dbReference type="PANTHER" id="PTHR34450">
    <property type="entry name" value="DEFENSIN-LIKE PROTEIN 245-RELATED"/>
    <property type="match status" value="1"/>
</dbReference>
<dbReference type="Pfam" id="PF06876">
    <property type="entry name" value="SCRL"/>
    <property type="match status" value="1"/>
</dbReference>
<gene>
    <name type="primary">SCRL20</name>
    <name type="ordered locus">At4g10115</name>
    <name type="ORF">F28M11</name>
</gene>
<accession>P82639</accession>
<sequence>MKNATSLIIYCFLMFLLMNNVKGQGKKKPPCPLGLSANGKCGHDGPKLCFSEMERKFNKDVVKTITHCKCWDDRRNNVDKHRCTCYLKHGFPCTNG</sequence>
<organism evidence="3">
    <name type="scientific">Arabidopsis thaliana</name>
    <name type="common">Mouse-ear cress</name>
    <dbReference type="NCBI Taxonomy" id="3702"/>
    <lineage>
        <taxon>Eukaryota</taxon>
        <taxon>Viridiplantae</taxon>
        <taxon>Streptophyta</taxon>
        <taxon>Embryophyta</taxon>
        <taxon>Tracheophyta</taxon>
        <taxon>Spermatophyta</taxon>
        <taxon>Magnoliopsida</taxon>
        <taxon>eudicotyledons</taxon>
        <taxon>Gunneridae</taxon>
        <taxon>Pentapetalae</taxon>
        <taxon>rosids</taxon>
        <taxon>malvids</taxon>
        <taxon>Brassicales</taxon>
        <taxon>Brassicaceae</taxon>
        <taxon>Camelineae</taxon>
        <taxon>Arabidopsis</taxon>
    </lineage>
</organism>
<comment type="subcellular location">
    <subcellularLocation>
        <location evidence="1">Secreted</location>
    </subcellularLocation>
</comment>
<comment type="similarity">
    <text evidence="3">Belongs to the DEFL family.</text>
</comment>
<name>DF236_ARATH</name>
<feature type="signal peptide" evidence="2">
    <location>
        <begin position="1"/>
        <end position="23"/>
    </location>
</feature>
<feature type="chain" id="PRO_0000031946" description="Putative defensin-like protein 236">
    <location>
        <begin position="24"/>
        <end position="96"/>
    </location>
</feature>
<feature type="disulfide bond" evidence="1">
    <location>
        <begin position="31"/>
        <end position="93"/>
    </location>
</feature>
<feature type="disulfide bond" evidence="1">
    <location>
        <begin position="41"/>
        <end position="70"/>
    </location>
</feature>
<feature type="disulfide bond" evidence="1">
    <location>
        <begin position="49"/>
        <end position="83"/>
    </location>
</feature>
<feature type="disulfide bond" evidence="1">
    <location>
        <begin position="68"/>
        <end position="85"/>
    </location>
</feature>
<protein>
    <recommendedName>
        <fullName>Putative defensin-like protein 236</fullName>
    </recommendedName>
    <alternativeName>
        <fullName>Putative S locus cysteine-rich-like protein 20</fullName>
        <shortName>Protein SCRL20</shortName>
        <shortName>SCR-like protein 20</shortName>
    </alternativeName>
</protein>